<keyword id="KW-0255">Endonuclease</keyword>
<keyword id="KW-0378">Hydrolase</keyword>
<keyword id="KW-0540">Nuclease</keyword>
<keyword id="KW-1185">Reference proteome</keyword>
<keyword id="KW-0694">RNA-binding</keyword>
<keyword id="KW-0699">rRNA-binding</keyword>
<evidence type="ECO:0000255" key="1">
    <source>
        <dbReference type="HAMAP-Rule" id="MF_01042"/>
    </source>
</evidence>
<comment type="function">
    <text evidence="1">Acts as a ribosome collision sensor. Detects stalled/collided disomes (pairs of ribosomes where the leading ribosome is stalled and a second ribosome has collided with it) and endonucleolytically cleaves mRNA at the 5' boundary of the stalled ribosome. Stalled/collided disomes form a new interface (primarily via the 30S subunits) that binds SmrB. Cleaved mRNA becomes available for tmRNA ligation, leading to ribosomal subunit dissociation and rescue of stalled ribosomes.</text>
</comment>
<comment type="subunit">
    <text evidence="1">Associates with collided ribosomes, but not with correctly translating polysomes.</text>
</comment>
<comment type="similarity">
    <text evidence="1">Belongs to the SmrB family.</text>
</comment>
<dbReference type="EC" id="3.1.-.-" evidence="1"/>
<dbReference type="EMBL" id="BX571869">
    <property type="protein sequence ID" value="CAE15572.1"/>
    <property type="molecule type" value="Genomic_DNA"/>
</dbReference>
<dbReference type="SMR" id="Q7N290"/>
<dbReference type="STRING" id="243265.plu3198"/>
<dbReference type="KEGG" id="plu:plu3198"/>
<dbReference type="eggNOG" id="COG2840">
    <property type="taxonomic scope" value="Bacteria"/>
</dbReference>
<dbReference type="HOGENOM" id="CLU_055978_4_0_6"/>
<dbReference type="Proteomes" id="UP000002514">
    <property type="component" value="Chromosome"/>
</dbReference>
<dbReference type="GO" id="GO:0004521">
    <property type="term" value="F:RNA endonuclease activity"/>
    <property type="evidence" value="ECO:0007669"/>
    <property type="project" value="UniProtKB-UniRule"/>
</dbReference>
<dbReference type="GO" id="GO:0019843">
    <property type="term" value="F:rRNA binding"/>
    <property type="evidence" value="ECO:0007669"/>
    <property type="project" value="UniProtKB-UniRule"/>
</dbReference>
<dbReference type="GO" id="GO:0072344">
    <property type="term" value="P:rescue of stalled ribosome"/>
    <property type="evidence" value="ECO:0007669"/>
    <property type="project" value="UniProtKB-UniRule"/>
</dbReference>
<dbReference type="Gene3D" id="3.30.1370.110">
    <property type="match status" value="1"/>
</dbReference>
<dbReference type="HAMAP" id="MF_01042">
    <property type="entry name" value="SmrB"/>
    <property type="match status" value="1"/>
</dbReference>
<dbReference type="InterPro" id="IPR002625">
    <property type="entry name" value="Smr_dom"/>
</dbReference>
<dbReference type="InterPro" id="IPR036063">
    <property type="entry name" value="Smr_dom_sf"/>
</dbReference>
<dbReference type="InterPro" id="IPR022990">
    <property type="entry name" value="SmrB-like"/>
</dbReference>
<dbReference type="NCBIfam" id="NF003432">
    <property type="entry name" value="PRK04946.1"/>
    <property type="match status" value="1"/>
</dbReference>
<dbReference type="PANTHER" id="PTHR35562">
    <property type="entry name" value="DNA ENDONUCLEASE SMRA-RELATED"/>
    <property type="match status" value="1"/>
</dbReference>
<dbReference type="PANTHER" id="PTHR35562:SF1">
    <property type="entry name" value="UPF0115 PROTEIN YFCN"/>
    <property type="match status" value="1"/>
</dbReference>
<dbReference type="Pfam" id="PF01713">
    <property type="entry name" value="Smr"/>
    <property type="match status" value="1"/>
</dbReference>
<dbReference type="SMART" id="SM00463">
    <property type="entry name" value="SMR"/>
    <property type="match status" value="1"/>
</dbReference>
<dbReference type="SUPFAM" id="SSF160443">
    <property type="entry name" value="SMR domain-like"/>
    <property type="match status" value="1"/>
</dbReference>
<dbReference type="PROSITE" id="PS50828">
    <property type="entry name" value="SMR"/>
    <property type="match status" value="1"/>
</dbReference>
<name>SMRB_PHOLL</name>
<protein>
    <recommendedName>
        <fullName evidence="1">Ribosome rescue factor SmrB</fullName>
        <ecNumber evidence="1">3.1.-.-</ecNumber>
    </recommendedName>
</protein>
<feature type="chain" id="PRO_0000214557" description="Ribosome rescue factor SmrB">
    <location>
        <begin position="1"/>
        <end position="178"/>
    </location>
</feature>
<feature type="domain" description="Smr" evidence="1">
    <location>
        <begin position="99"/>
        <end position="174"/>
    </location>
</feature>
<sequence length="178" mass="20608">MMKNKYSLNEEEIHLFQQSVAGTKRINQDTVLHSPRRKKTSYIAPERIQQEQIDASYYFSDEFQPNLDSEGPTRYVRGDTNHYELKKLRRGDYSPELFLDLHGLTQMQAKQEIGALIAACRREHVYCACIMHGHGKHILKQQTPLWLAQHPDIIAFHQAPKEWGGNAALLILIELDEP</sequence>
<gene>
    <name evidence="1" type="primary">smrB</name>
    <name type="ordered locus">plu3198</name>
</gene>
<accession>Q7N290</accession>
<reference key="1">
    <citation type="journal article" date="2003" name="Nat. Biotechnol.">
        <title>The genome sequence of the entomopathogenic bacterium Photorhabdus luminescens.</title>
        <authorList>
            <person name="Duchaud E."/>
            <person name="Rusniok C."/>
            <person name="Frangeul L."/>
            <person name="Buchrieser C."/>
            <person name="Givaudan A."/>
            <person name="Taourit S."/>
            <person name="Bocs S."/>
            <person name="Boursaux-Eude C."/>
            <person name="Chandler M."/>
            <person name="Charles J.-F."/>
            <person name="Dassa E."/>
            <person name="Derose R."/>
            <person name="Derzelle S."/>
            <person name="Freyssinet G."/>
            <person name="Gaudriault S."/>
            <person name="Medigue C."/>
            <person name="Lanois A."/>
            <person name="Powell K."/>
            <person name="Siguier P."/>
            <person name="Vincent R."/>
            <person name="Wingate V."/>
            <person name="Zouine M."/>
            <person name="Glaser P."/>
            <person name="Boemare N."/>
            <person name="Danchin A."/>
            <person name="Kunst F."/>
        </authorList>
    </citation>
    <scope>NUCLEOTIDE SEQUENCE [LARGE SCALE GENOMIC DNA]</scope>
    <source>
        <strain>DSM 15139 / CIP 105565 / TT01</strain>
    </source>
</reference>
<proteinExistence type="inferred from homology"/>
<organism>
    <name type="scientific">Photorhabdus laumondii subsp. laumondii (strain DSM 15139 / CIP 105565 / TT01)</name>
    <name type="common">Photorhabdus luminescens subsp. laumondii</name>
    <dbReference type="NCBI Taxonomy" id="243265"/>
    <lineage>
        <taxon>Bacteria</taxon>
        <taxon>Pseudomonadati</taxon>
        <taxon>Pseudomonadota</taxon>
        <taxon>Gammaproteobacteria</taxon>
        <taxon>Enterobacterales</taxon>
        <taxon>Morganellaceae</taxon>
        <taxon>Photorhabdus</taxon>
    </lineage>
</organism>